<sequence length="253" mass="27528">MSFCVLIPARLASTRLPRKVLLDVGGIPMIEQVRRRALESGAAQVVVAADHPEVVDCIRSYGGEALLTAAEHVCGTERLAEAARLLGLADDAIIVNLQGDEPGMTPALLHATAQLLLDHPQRQMATAAVPITHWDELADPHAVKLVLDAEGCARYFSRAPIPWDRSHFPLSSGQTLPQTPGIWWRHLGLYAYRNAFLQDYAAWSASPLEVIESLEQMRALERGVQIAVYCAAEAPAAGVDTAADLDRVRDLFP</sequence>
<comment type="function">
    <text evidence="1">Activates KDO (a required 8-carbon sugar) for incorporation into bacterial lipopolysaccharide in Gram-negative bacteria.</text>
</comment>
<comment type="catalytic activity">
    <reaction evidence="1">
        <text>3-deoxy-alpha-D-manno-oct-2-ulosonate + CTP = CMP-3-deoxy-beta-D-manno-octulosonate + diphosphate</text>
        <dbReference type="Rhea" id="RHEA:23448"/>
        <dbReference type="ChEBI" id="CHEBI:33019"/>
        <dbReference type="ChEBI" id="CHEBI:37563"/>
        <dbReference type="ChEBI" id="CHEBI:85986"/>
        <dbReference type="ChEBI" id="CHEBI:85987"/>
        <dbReference type="EC" id="2.7.7.38"/>
    </reaction>
</comment>
<comment type="pathway">
    <text evidence="1">Nucleotide-sugar biosynthesis; CMP-3-deoxy-D-manno-octulosonate biosynthesis; CMP-3-deoxy-D-manno-octulosonate from 3-deoxy-D-manno-octulosonate and CTP: step 1/1.</text>
</comment>
<comment type="pathway">
    <text evidence="1">Bacterial outer membrane biogenesis; lipopolysaccharide biosynthesis.</text>
</comment>
<comment type="subcellular location">
    <subcellularLocation>
        <location evidence="1">Cytoplasm</location>
    </subcellularLocation>
</comment>
<comment type="similarity">
    <text evidence="1">Belongs to the KdsB family.</text>
</comment>
<keyword id="KW-0963">Cytoplasm</keyword>
<keyword id="KW-0448">Lipopolysaccharide biosynthesis</keyword>
<keyword id="KW-0548">Nucleotidyltransferase</keyword>
<keyword id="KW-0808">Transferase</keyword>
<reference key="1">
    <citation type="submission" date="2008-08" db="EMBL/GenBank/DDBJ databases">
        <title>Complete sequence of Acidithiobacillus ferrooxidans ATCC 53993.</title>
        <authorList>
            <person name="Lucas S."/>
            <person name="Copeland A."/>
            <person name="Lapidus A."/>
            <person name="Glavina del Rio T."/>
            <person name="Dalin E."/>
            <person name="Tice H."/>
            <person name="Bruce D."/>
            <person name="Goodwin L."/>
            <person name="Pitluck S."/>
            <person name="Sims D."/>
            <person name="Brettin T."/>
            <person name="Detter J.C."/>
            <person name="Han C."/>
            <person name="Kuske C.R."/>
            <person name="Larimer F."/>
            <person name="Land M."/>
            <person name="Hauser L."/>
            <person name="Kyrpides N."/>
            <person name="Lykidis A."/>
            <person name="Borole A.P."/>
        </authorList>
    </citation>
    <scope>NUCLEOTIDE SEQUENCE [LARGE SCALE GENOMIC DNA]</scope>
    <source>
        <strain>ATCC 53993 / BNL-5-31</strain>
    </source>
</reference>
<name>KDSB_ACIF5</name>
<protein>
    <recommendedName>
        <fullName evidence="1">3-deoxy-manno-octulosonate cytidylyltransferase</fullName>
        <ecNumber evidence="1">2.7.7.38</ecNumber>
    </recommendedName>
    <alternativeName>
        <fullName evidence="1">CMP-2-keto-3-deoxyoctulosonic acid synthase</fullName>
        <shortName evidence="1">CKS</shortName>
        <shortName evidence="1">CMP-KDO synthase</shortName>
    </alternativeName>
</protein>
<organism>
    <name type="scientific">Acidithiobacillus ferrooxidans (strain ATCC 53993 / BNL-5-31)</name>
    <name type="common">Leptospirillum ferrooxidans (ATCC 53993)</name>
    <dbReference type="NCBI Taxonomy" id="380394"/>
    <lineage>
        <taxon>Bacteria</taxon>
        <taxon>Pseudomonadati</taxon>
        <taxon>Pseudomonadota</taxon>
        <taxon>Acidithiobacillia</taxon>
        <taxon>Acidithiobacillales</taxon>
        <taxon>Acidithiobacillaceae</taxon>
        <taxon>Acidithiobacillus</taxon>
    </lineage>
</organism>
<dbReference type="EC" id="2.7.7.38" evidence="1"/>
<dbReference type="EMBL" id="CP001132">
    <property type="protein sequence ID" value="ACH82904.1"/>
    <property type="molecule type" value="Genomic_DNA"/>
</dbReference>
<dbReference type="RefSeq" id="WP_009566884.1">
    <property type="nucleotide sequence ID" value="NC_011206.1"/>
</dbReference>
<dbReference type="SMR" id="B5EMX4"/>
<dbReference type="GeneID" id="65279861"/>
<dbReference type="KEGG" id="afe:Lferr_0651"/>
<dbReference type="eggNOG" id="COG1212">
    <property type="taxonomic scope" value="Bacteria"/>
</dbReference>
<dbReference type="HOGENOM" id="CLU_065038_1_0_6"/>
<dbReference type="UniPathway" id="UPA00030"/>
<dbReference type="UniPathway" id="UPA00358">
    <property type="reaction ID" value="UER00476"/>
</dbReference>
<dbReference type="GO" id="GO:0005829">
    <property type="term" value="C:cytosol"/>
    <property type="evidence" value="ECO:0007669"/>
    <property type="project" value="TreeGrafter"/>
</dbReference>
<dbReference type="GO" id="GO:0008690">
    <property type="term" value="F:3-deoxy-manno-octulosonate cytidylyltransferase activity"/>
    <property type="evidence" value="ECO:0007669"/>
    <property type="project" value="UniProtKB-UniRule"/>
</dbReference>
<dbReference type="GO" id="GO:0033468">
    <property type="term" value="P:CMP-keto-3-deoxy-D-manno-octulosonic acid biosynthetic process"/>
    <property type="evidence" value="ECO:0007669"/>
    <property type="project" value="UniProtKB-UniRule"/>
</dbReference>
<dbReference type="GO" id="GO:0009103">
    <property type="term" value="P:lipopolysaccharide biosynthetic process"/>
    <property type="evidence" value="ECO:0007669"/>
    <property type="project" value="UniProtKB-UniRule"/>
</dbReference>
<dbReference type="CDD" id="cd02517">
    <property type="entry name" value="CMP-KDO-Synthetase"/>
    <property type="match status" value="1"/>
</dbReference>
<dbReference type="FunFam" id="3.90.550.10:FF:000011">
    <property type="entry name" value="3-deoxy-manno-octulosonate cytidylyltransferase"/>
    <property type="match status" value="1"/>
</dbReference>
<dbReference type="Gene3D" id="3.90.550.10">
    <property type="entry name" value="Spore Coat Polysaccharide Biosynthesis Protein SpsA, Chain A"/>
    <property type="match status" value="1"/>
</dbReference>
<dbReference type="HAMAP" id="MF_00057">
    <property type="entry name" value="KdsB"/>
    <property type="match status" value="1"/>
</dbReference>
<dbReference type="InterPro" id="IPR003329">
    <property type="entry name" value="Cytidylyl_trans"/>
</dbReference>
<dbReference type="InterPro" id="IPR004528">
    <property type="entry name" value="KdsB"/>
</dbReference>
<dbReference type="InterPro" id="IPR029044">
    <property type="entry name" value="Nucleotide-diphossugar_trans"/>
</dbReference>
<dbReference type="NCBIfam" id="TIGR00466">
    <property type="entry name" value="kdsB"/>
    <property type="match status" value="1"/>
</dbReference>
<dbReference type="NCBIfam" id="NF003952">
    <property type="entry name" value="PRK05450.1-5"/>
    <property type="match status" value="1"/>
</dbReference>
<dbReference type="PANTHER" id="PTHR42866">
    <property type="entry name" value="3-DEOXY-MANNO-OCTULOSONATE CYTIDYLYLTRANSFERASE"/>
    <property type="match status" value="1"/>
</dbReference>
<dbReference type="PANTHER" id="PTHR42866:SF2">
    <property type="entry name" value="3-DEOXY-MANNO-OCTULOSONATE CYTIDYLYLTRANSFERASE, MITOCHONDRIAL"/>
    <property type="match status" value="1"/>
</dbReference>
<dbReference type="Pfam" id="PF02348">
    <property type="entry name" value="CTP_transf_3"/>
    <property type="match status" value="1"/>
</dbReference>
<dbReference type="SUPFAM" id="SSF53448">
    <property type="entry name" value="Nucleotide-diphospho-sugar transferases"/>
    <property type="match status" value="1"/>
</dbReference>
<gene>
    <name evidence="1" type="primary">kdsB</name>
    <name type="ordered locus">Lferr_0651</name>
</gene>
<proteinExistence type="inferred from homology"/>
<accession>B5EMX4</accession>
<feature type="chain" id="PRO_1000091850" description="3-deoxy-manno-octulosonate cytidylyltransferase">
    <location>
        <begin position="1"/>
        <end position="253"/>
    </location>
</feature>
<evidence type="ECO:0000255" key="1">
    <source>
        <dbReference type="HAMAP-Rule" id="MF_00057"/>
    </source>
</evidence>